<name>Y189_ARCFU</name>
<keyword id="KW-0472">Membrane</keyword>
<keyword id="KW-1185">Reference proteome</keyword>
<keyword id="KW-0812">Transmembrane</keyword>
<keyword id="KW-1133">Transmembrane helix</keyword>
<protein>
    <recommendedName>
        <fullName>Uncharacterized protein AF_0189</fullName>
    </recommendedName>
</protein>
<evidence type="ECO:0000255" key="1"/>
<evidence type="ECO:0000305" key="2"/>
<proteinExistence type="predicted"/>
<sequence length="96" mass="11332">MPTHQCHIIRAVPVVRYVVALLHWLLWRVVVIIAISVPVFHHPFRNLRPCHFRPSWVCNRILRTSSFPMVLPSQHRALPSHQHQHYANLLPIHFTS</sequence>
<comment type="subcellular location">
    <subcellularLocation>
        <location evidence="2">Membrane</location>
        <topology evidence="2">Single-pass membrane protein</topology>
    </subcellularLocation>
</comment>
<feature type="chain" id="PRO_0000127848" description="Uncharacterized protein AF_0189">
    <location>
        <begin position="1"/>
        <end position="96"/>
    </location>
</feature>
<feature type="transmembrane region" description="Helical" evidence="1">
    <location>
        <begin position="13"/>
        <end position="35"/>
    </location>
</feature>
<organism>
    <name type="scientific">Archaeoglobus fulgidus (strain ATCC 49558 / DSM 4304 / JCM 9628 / NBRC 100126 / VC-16)</name>
    <dbReference type="NCBI Taxonomy" id="224325"/>
    <lineage>
        <taxon>Archaea</taxon>
        <taxon>Methanobacteriati</taxon>
        <taxon>Methanobacteriota</taxon>
        <taxon>Archaeoglobi</taxon>
        <taxon>Archaeoglobales</taxon>
        <taxon>Archaeoglobaceae</taxon>
        <taxon>Archaeoglobus</taxon>
    </lineage>
</organism>
<reference key="1">
    <citation type="journal article" date="1997" name="Nature">
        <title>The complete genome sequence of the hyperthermophilic, sulphate-reducing archaeon Archaeoglobus fulgidus.</title>
        <authorList>
            <person name="Klenk H.-P."/>
            <person name="Clayton R.A."/>
            <person name="Tomb J.-F."/>
            <person name="White O."/>
            <person name="Nelson K.E."/>
            <person name="Ketchum K.A."/>
            <person name="Dodson R.J."/>
            <person name="Gwinn M.L."/>
            <person name="Hickey E.K."/>
            <person name="Peterson J.D."/>
            <person name="Richardson D.L."/>
            <person name="Kerlavage A.R."/>
            <person name="Graham D.E."/>
            <person name="Kyrpides N.C."/>
            <person name="Fleischmann R.D."/>
            <person name="Quackenbush J."/>
            <person name="Lee N.H."/>
            <person name="Sutton G.G."/>
            <person name="Gill S.R."/>
            <person name="Kirkness E.F."/>
            <person name="Dougherty B.A."/>
            <person name="McKenney K."/>
            <person name="Adams M.D."/>
            <person name="Loftus B.J."/>
            <person name="Peterson S.N."/>
            <person name="Reich C.I."/>
            <person name="McNeil L.K."/>
            <person name="Badger J.H."/>
            <person name="Glodek A."/>
            <person name="Zhou L."/>
            <person name="Overbeek R."/>
            <person name="Gocayne J.D."/>
            <person name="Weidman J.F."/>
            <person name="McDonald L.A."/>
            <person name="Utterback T.R."/>
            <person name="Cotton M.D."/>
            <person name="Spriggs T."/>
            <person name="Artiach P."/>
            <person name="Kaine B.P."/>
            <person name="Sykes S.M."/>
            <person name="Sadow P.W."/>
            <person name="D'Andrea K.P."/>
            <person name="Bowman C."/>
            <person name="Fujii C."/>
            <person name="Garland S.A."/>
            <person name="Mason T.M."/>
            <person name="Olsen G.J."/>
            <person name="Fraser C.M."/>
            <person name="Smith H.O."/>
            <person name="Woese C.R."/>
            <person name="Venter J.C."/>
        </authorList>
    </citation>
    <scope>NUCLEOTIDE SEQUENCE [LARGE SCALE GENOMIC DNA]</scope>
    <source>
        <strain>ATCC 49558 / DSM 4304 / JCM 9628 / NBRC 100126 / VC-16</strain>
    </source>
</reference>
<gene>
    <name type="ordered locus">AF_0189</name>
</gene>
<dbReference type="EMBL" id="AE000782">
    <property type="protein sequence ID" value="AAB91047.1"/>
    <property type="molecule type" value="Genomic_DNA"/>
</dbReference>
<dbReference type="PIR" id="E69273">
    <property type="entry name" value="E69273"/>
</dbReference>
<dbReference type="SMR" id="O30049"/>
<dbReference type="STRING" id="224325.AF_0189"/>
<dbReference type="PaxDb" id="224325-AF_0189"/>
<dbReference type="EnsemblBacteria" id="AAB91047">
    <property type="protein sequence ID" value="AAB91047"/>
    <property type="gene ID" value="AF_0189"/>
</dbReference>
<dbReference type="KEGG" id="afu:AF_0189"/>
<dbReference type="HOGENOM" id="CLU_2353064_0_0_2"/>
<dbReference type="Proteomes" id="UP000002199">
    <property type="component" value="Chromosome"/>
</dbReference>
<dbReference type="GO" id="GO:0016020">
    <property type="term" value="C:membrane"/>
    <property type="evidence" value="ECO:0007669"/>
    <property type="project" value="UniProtKB-SubCell"/>
</dbReference>
<accession>O30049</accession>